<dbReference type="EMBL" id="U94848">
    <property type="protein sequence ID" value="AAB96523.1"/>
    <property type="molecule type" value="Genomic_DNA"/>
</dbReference>
<dbReference type="EMBL" id="AY603355">
    <property type="protein sequence ID" value="AAT10531.1"/>
    <property type="molecule type" value="Genomic_DNA"/>
</dbReference>
<dbReference type="PIR" id="T37408">
    <property type="entry name" value="T37408"/>
</dbReference>
<dbReference type="SMR" id="P68709"/>
<dbReference type="DNASU" id="3707671"/>
<dbReference type="KEGG" id="vg:3707671"/>
<dbReference type="Proteomes" id="UP000159908">
    <property type="component" value="Segment"/>
</dbReference>
<dbReference type="Proteomes" id="UP000172909">
    <property type="component" value="Segment"/>
</dbReference>
<dbReference type="GO" id="GO:0006260">
    <property type="term" value="P:DNA replication"/>
    <property type="evidence" value="ECO:0007669"/>
    <property type="project" value="UniProtKB-KW"/>
</dbReference>
<dbReference type="Gene3D" id="6.10.140.1880">
    <property type="match status" value="1"/>
</dbReference>
<dbReference type="InterPro" id="IPR010267">
    <property type="entry name" value="Chordopox_A20R"/>
</dbReference>
<dbReference type="Pfam" id="PF05941">
    <property type="entry name" value="Chordopox_A20R"/>
    <property type="match status" value="1"/>
</dbReference>
<gene>
    <name type="ordered locus">MVA132R</name>
    <name type="ordered locus">ACAM3000_MVA_132</name>
</gene>
<organism>
    <name type="scientific">Vaccinia virus (strain Ankara)</name>
    <name type="common">VACV</name>
    <dbReference type="NCBI Taxonomy" id="126794"/>
    <lineage>
        <taxon>Viruses</taxon>
        <taxon>Varidnaviria</taxon>
        <taxon>Bamfordvirae</taxon>
        <taxon>Nucleocytoviricota</taxon>
        <taxon>Pokkesviricetes</taxon>
        <taxon>Chitovirales</taxon>
        <taxon>Poxviridae</taxon>
        <taxon>Chordopoxvirinae</taxon>
        <taxon>Orthopoxvirus</taxon>
        <taxon>Vaccinia virus</taxon>
    </lineage>
</organism>
<proteinExistence type="inferred from homology"/>
<organismHost>
    <name type="scientific">Homo sapiens</name>
    <name type="common">Human</name>
    <dbReference type="NCBI Taxonomy" id="9606"/>
</organismHost>
<name>A20_VACCA</name>
<keyword id="KW-0235">DNA replication</keyword>
<protein>
    <recommendedName>
        <fullName>DNA polymerase processivity factor component A20</fullName>
    </recommendedName>
</protein>
<comment type="function">
    <text evidence="1">Plays an essential role in viral DNA replication by acting as the polymerase processivity factor together with protein D4. May serve as a bridge which links the DNA polymerase E9 and the uracil DNA glycosylase (By similarity).</text>
</comment>
<comment type="subunit">
    <text evidence="1">Interacts with the DNA polymerase catalytic subunit E9. Interacts with UDG. Component of the Uracil-DNA glycosylase(UDG)-A20-polymerase complex; A20 and UDG form a heterodimeric processivity factor that associates with E9 to form the processive polymerase holoenzyme. Interacts with D5 (By similarity).</text>
</comment>
<comment type="similarity">
    <text evidence="2">Belongs to the poxviruses A20 family.</text>
</comment>
<evidence type="ECO:0000250" key="1"/>
<evidence type="ECO:0000305" key="2"/>
<sequence length="426" mass="49074">MTSSADLTNLKELLSLYKSLKFSDSAAIEKYNSLVEWGTSTYWKIGVQKVANVETSISDYYDEVKNKPFNIDPGYYIFLPVYFGSVFIYSKGKNMVELGSGNSFQIPDDMRSACNKVLDSDNGIDFLRFVLLNNRWIMEDAISKYQSPVNIFKLASEYGLNIPKYLEIEIEEDTLFDDELYSIIERSFDDKFPKISISYIKLGELRRQVVDFFKFSFMYIESIKVDRIGDNIFIPSVITKSGKKILVKDVDHLIRSKVREHTFVKVKKKNTFSILYDYDGNGTETRGEVIKRIIDTIGRDYYVNGKYFSKVGSAGLKQLTNKLDINECATVDELVDEINKSGTVKRKIKNQSAFDLSRECLGYPEADFITLVNNMRFKIENCKVVNFNIENTNCLNNPSIETIYGNFNQFVSIFNIVTDVKKRLFE</sequence>
<reference key="1">
    <citation type="journal article" date="1998" name="Virology">
        <title>The complete genomic sequence of the modified vaccinia Ankara strain: comparison with other orthopoxviruses.</title>
        <authorList>
            <person name="Antoine G."/>
            <person name="Scheiflinger F."/>
            <person name="Dorner F."/>
            <person name="Falkner F.G."/>
        </authorList>
    </citation>
    <scope>NUCLEOTIDE SEQUENCE [LARGE SCALE GENOMIC DNA]</scope>
</reference>
<reference key="2">
    <citation type="submission" date="2004-04" db="EMBL/GenBank/DDBJ databases">
        <authorList>
            <person name="Esposito J.J."/>
            <person name="Frace M."/>
            <person name="Sammons S.A."/>
            <person name="Olsen-Rasmussen M.S."/>
            <person name="Osborne J."/>
            <person name="Khristova M."/>
            <person name="Wohlhueter R.M."/>
        </authorList>
    </citation>
    <scope>NUCLEOTIDE SEQUENCE [LARGE SCALE GENOMIC DNA]</scope>
    <source>
        <strain>Isolate Acambis 3000</strain>
    </source>
</reference>
<accession>P68709</accession>
<accession>O57228</accession>
<accession>Q80HV4</accession>
<feature type="chain" id="PRO_0000099266" description="DNA polymerase processivity factor component A20">
    <location>
        <begin position="1"/>
        <end position="426"/>
    </location>
</feature>